<dbReference type="EC" id="1.3.1.98"/>
<dbReference type="EMBL" id="M31827">
    <property type="protein sequence ID" value="AAA83969.1"/>
    <property type="molecule type" value="Genomic_DNA"/>
</dbReference>
<dbReference type="EMBL" id="AL009126">
    <property type="protein sequence ID" value="CAB13396.1"/>
    <property type="molecule type" value="Genomic_DNA"/>
</dbReference>
<dbReference type="EMBL" id="D10602">
    <property type="protein sequence ID" value="BAA01455.1"/>
    <property type="molecule type" value="Genomic_DNA"/>
</dbReference>
<dbReference type="EMBL" id="M31800">
    <property type="protein sequence ID" value="AAA22392.1"/>
    <property type="molecule type" value="Genomic_DNA"/>
</dbReference>
<dbReference type="PIR" id="S26500">
    <property type="entry name" value="A43727"/>
</dbReference>
<dbReference type="RefSeq" id="NP_389406.1">
    <property type="nucleotide sequence ID" value="NC_000964.3"/>
</dbReference>
<dbReference type="RefSeq" id="WP_003232182.1">
    <property type="nucleotide sequence ID" value="NZ_OZ025638.1"/>
</dbReference>
<dbReference type="SMR" id="P18579"/>
<dbReference type="FunCoup" id="P18579">
    <property type="interactions" value="444"/>
</dbReference>
<dbReference type="IntAct" id="P18579">
    <property type="interactions" value="1"/>
</dbReference>
<dbReference type="MINT" id="P18579"/>
<dbReference type="STRING" id="224308.BSU15230"/>
<dbReference type="jPOST" id="P18579"/>
<dbReference type="PaxDb" id="224308-BSU15230"/>
<dbReference type="EnsemblBacteria" id="CAB13396">
    <property type="protein sequence ID" value="CAB13396"/>
    <property type="gene ID" value="BSU_15230"/>
</dbReference>
<dbReference type="GeneID" id="939804"/>
<dbReference type="KEGG" id="bsu:BSU15230"/>
<dbReference type="PATRIC" id="fig|224308.179.peg.1661"/>
<dbReference type="eggNOG" id="COG0812">
    <property type="taxonomic scope" value="Bacteria"/>
</dbReference>
<dbReference type="InParanoid" id="P18579"/>
<dbReference type="OrthoDB" id="9804753at2"/>
<dbReference type="PhylomeDB" id="P18579"/>
<dbReference type="BioCyc" id="BSUB:BSU15230-MONOMER"/>
<dbReference type="UniPathway" id="UPA00219"/>
<dbReference type="Proteomes" id="UP000001570">
    <property type="component" value="Chromosome"/>
</dbReference>
<dbReference type="GO" id="GO:0005829">
    <property type="term" value="C:cytosol"/>
    <property type="evidence" value="ECO:0000318"/>
    <property type="project" value="GO_Central"/>
</dbReference>
<dbReference type="GO" id="GO:0071949">
    <property type="term" value="F:FAD binding"/>
    <property type="evidence" value="ECO:0007669"/>
    <property type="project" value="InterPro"/>
</dbReference>
<dbReference type="GO" id="GO:0050660">
    <property type="term" value="F:flavin adenine dinucleotide binding"/>
    <property type="evidence" value="ECO:0000318"/>
    <property type="project" value="GO_Central"/>
</dbReference>
<dbReference type="GO" id="GO:0008762">
    <property type="term" value="F:UDP-N-acetylmuramate dehydrogenase activity"/>
    <property type="evidence" value="ECO:0000318"/>
    <property type="project" value="GO_Central"/>
</dbReference>
<dbReference type="GO" id="GO:0051301">
    <property type="term" value="P:cell division"/>
    <property type="evidence" value="ECO:0007669"/>
    <property type="project" value="UniProtKB-KW"/>
</dbReference>
<dbReference type="GO" id="GO:0071555">
    <property type="term" value="P:cell wall organization"/>
    <property type="evidence" value="ECO:0000318"/>
    <property type="project" value="GO_Central"/>
</dbReference>
<dbReference type="GO" id="GO:0009252">
    <property type="term" value="P:peptidoglycan biosynthetic process"/>
    <property type="evidence" value="ECO:0007669"/>
    <property type="project" value="UniProtKB-UniRule"/>
</dbReference>
<dbReference type="GO" id="GO:0008360">
    <property type="term" value="P:regulation of cell shape"/>
    <property type="evidence" value="ECO:0007669"/>
    <property type="project" value="UniProtKB-KW"/>
</dbReference>
<dbReference type="Gene3D" id="3.30.465.10">
    <property type="match status" value="1"/>
</dbReference>
<dbReference type="Gene3D" id="3.90.78.10">
    <property type="entry name" value="UDP-N-acetylenolpyruvoylglucosamine reductase, C-terminal domain"/>
    <property type="match status" value="1"/>
</dbReference>
<dbReference type="Gene3D" id="3.30.43.10">
    <property type="entry name" value="Uridine Diphospho-n-acetylenolpyruvylglucosamine Reductase, domain 2"/>
    <property type="match status" value="1"/>
</dbReference>
<dbReference type="HAMAP" id="MF_00037">
    <property type="entry name" value="MurB"/>
    <property type="match status" value="1"/>
</dbReference>
<dbReference type="InterPro" id="IPR016166">
    <property type="entry name" value="FAD-bd_PCMH"/>
</dbReference>
<dbReference type="InterPro" id="IPR036318">
    <property type="entry name" value="FAD-bd_PCMH-like_sf"/>
</dbReference>
<dbReference type="InterPro" id="IPR016167">
    <property type="entry name" value="FAD-bd_PCMH_sub1"/>
</dbReference>
<dbReference type="InterPro" id="IPR016169">
    <property type="entry name" value="FAD-bd_PCMH_sub2"/>
</dbReference>
<dbReference type="InterPro" id="IPR003170">
    <property type="entry name" value="MurB"/>
</dbReference>
<dbReference type="InterPro" id="IPR011601">
    <property type="entry name" value="MurB_C"/>
</dbReference>
<dbReference type="InterPro" id="IPR036635">
    <property type="entry name" value="MurB_C_sf"/>
</dbReference>
<dbReference type="InterPro" id="IPR006094">
    <property type="entry name" value="Oxid_FAD_bind_N"/>
</dbReference>
<dbReference type="NCBIfam" id="TIGR00179">
    <property type="entry name" value="murB"/>
    <property type="match status" value="1"/>
</dbReference>
<dbReference type="NCBIfam" id="NF010480">
    <property type="entry name" value="PRK13905.1"/>
    <property type="match status" value="1"/>
</dbReference>
<dbReference type="PANTHER" id="PTHR21071">
    <property type="entry name" value="UDP-N-ACETYLENOLPYRUVOYLGLUCOSAMINE REDUCTASE"/>
    <property type="match status" value="1"/>
</dbReference>
<dbReference type="PANTHER" id="PTHR21071:SF5">
    <property type="entry name" value="UDP-N-ACETYLENOLPYRUVOYLGLUCOSAMINE REDUCTASE"/>
    <property type="match status" value="1"/>
</dbReference>
<dbReference type="Pfam" id="PF01565">
    <property type="entry name" value="FAD_binding_4"/>
    <property type="match status" value="1"/>
</dbReference>
<dbReference type="Pfam" id="PF02873">
    <property type="entry name" value="MurB_C"/>
    <property type="match status" value="1"/>
</dbReference>
<dbReference type="SUPFAM" id="SSF56176">
    <property type="entry name" value="FAD-binding/transporter-associated domain-like"/>
    <property type="match status" value="1"/>
</dbReference>
<dbReference type="SUPFAM" id="SSF56194">
    <property type="entry name" value="Uridine diphospho-N-Acetylenolpyruvylglucosamine reductase, MurB, C-terminal domain"/>
    <property type="match status" value="1"/>
</dbReference>
<dbReference type="PROSITE" id="PS51387">
    <property type="entry name" value="FAD_PCMH"/>
    <property type="match status" value="1"/>
</dbReference>
<accession>P18579</accession>
<accession>P16669</accession>
<accession>P37581</accession>
<proteinExistence type="inferred from homology"/>
<name>MURB_BACSU</name>
<feature type="chain" id="PRO_0000179178" description="UDP-N-acetylenolpyruvoylglucosamine reductase">
    <location>
        <begin position="1"/>
        <end position="303"/>
    </location>
</feature>
<feature type="domain" description="FAD-binding PCMH-type">
    <location>
        <begin position="29"/>
        <end position="196"/>
    </location>
</feature>
<feature type="active site" evidence="1">
    <location>
        <position position="174"/>
    </location>
</feature>
<feature type="active site" description="Proton donor" evidence="1">
    <location>
        <position position="225"/>
    </location>
</feature>
<feature type="active site" evidence="1">
    <location>
        <position position="295"/>
    </location>
</feature>
<protein>
    <recommendedName>
        <fullName>UDP-N-acetylenolpyruvoylglucosamine reductase</fullName>
        <ecNumber>1.3.1.98</ecNumber>
    </recommendedName>
    <alternativeName>
        <fullName>UDP-N-acetylmuramate dehydrogenase</fullName>
    </alternativeName>
</protein>
<keyword id="KW-0131">Cell cycle</keyword>
<keyword id="KW-0132">Cell division</keyword>
<keyword id="KW-0133">Cell shape</keyword>
<keyword id="KW-0961">Cell wall biogenesis/degradation</keyword>
<keyword id="KW-0963">Cytoplasm</keyword>
<keyword id="KW-0274">FAD</keyword>
<keyword id="KW-0285">Flavoprotein</keyword>
<keyword id="KW-0521">NADP</keyword>
<keyword id="KW-0560">Oxidoreductase</keyword>
<keyword id="KW-0573">Peptidoglycan synthesis</keyword>
<keyword id="KW-1185">Reference proteome</keyword>
<gene>
    <name type="primary">murB</name>
    <name type="synonym">ylxC</name>
    <name type="ordered locus">BSU15230</name>
</gene>
<organism>
    <name type="scientific">Bacillus subtilis (strain 168)</name>
    <dbReference type="NCBI Taxonomy" id="224308"/>
    <lineage>
        <taxon>Bacteria</taxon>
        <taxon>Bacillati</taxon>
        <taxon>Bacillota</taxon>
        <taxon>Bacilli</taxon>
        <taxon>Bacillales</taxon>
        <taxon>Bacillaceae</taxon>
        <taxon>Bacillus</taxon>
    </lineage>
</organism>
<sequence length="303" mass="32808">MEKVIQELKEREVGKVLANEPLANHTTMKIGGPADVLVIPSSVDAVKDIMDVIKKYDVKWTVIGRGSNLLVLDEGIRGVVIKLGAGLDHLELEGEQVTVGGGYSVVRLATSLSKKGLSGLEFAAGIPGSVGGAVYMNAGAHGSDMSEILVKAHILFEDGTIEWLTNEQMDFSYRTSVLQKKRPGVCLEAVLQLEQKDKESIVQQMQSNKDYRKNTQPYSSPCAGSIFRNPLPNHAGNLVEKAGLKGYQIGGAKISEMHGNFIVNAGGASAKDVLDLIDHVKKTIREKYEIDMHTEVEIIGGNR</sequence>
<comment type="function">
    <text evidence="2">Cell wall formation.</text>
</comment>
<comment type="catalytic activity">
    <reaction>
        <text>UDP-N-acetyl-alpha-D-muramate + NADP(+) = UDP-N-acetyl-3-O-(1-carboxyvinyl)-alpha-D-glucosamine + NADPH + H(+)</text>
        <dbReference type="Rhea" id="RHEA:12248"/>
        <dbReference type="ChEBI" id="CHEBI:15378"/>
        <dbReference type="ChEBI" id="CHEBI:57783"/>
        <dbReference type="ChEBI" id="CHEBI:58349"/>
        <dbReference type="ChEBI" id="CHEBI:68483"/>
        <dbReference type="ChEBI" id="CHEBI:70757"/>
        <dbReference type="EC" id="1.3.1.98"/>
    </reaction>
</comment>
<comment type="cofactor">
    <cofactor>
        <name>FAD</name>
        <dbReference type="ChEBI" id="CHEBI:57692"/>
    </cofactor>
</comment>
<comment type="pathway">
    <text>Cell wall biogenesis; peptidoglycan biosynthesis.</text>
</comment>
<comment type="subcellular location">
    <subcellularLocation>
        <location evidence="1">Cytoplasm</location>
    </subcellularLocation>
</comment>
<comment type="similarity">
    <text evidence="3">Belongs to the MurB family.</text>
</comment>
<evidence type="ECO:0000250" key="1"/>
<evidence type="ECO:0000269" key="2">
    <source>
    </source>
</evidence>
<evidence type="ECO:0000305" key="3"/>
<reference key="1">
    <citation type="journal article" date="1989" name="J. Bacteriol.">
        <title>Nucleotide sequence and insertional inactivation of a Bacillus subtilis gene that affects cell division, sporulation, and temperature sensitivity.</title>
        <authorList>
            <person name="Beall B."/>
            <person name="Lutkenhaus J."/>
        </authorList>
    </citation>
    <scope>NUCLEOTIDE SEQUENCE [GENOMIC DNA]</scope>
</reference>
<reference key="2">
    <citation type="journal article" date="1997" name="Nature">
        <title>The complete genome sequence of the Gram-positive bacterium Bacillus subtilis.</title>
        <authorList>
            <person name="Kunst F."/>
            <person name="Ogasawara N."/>
            <person name="Moszer I."/>
            <person name="Albertini A.M."/>
            <person name="Alloni G."/>
            <person name="Azevedo V."/>
            <person name="Bertero M.G."/>
            <person name="Bessieres P."/>
            <person name="Bolotin A."/>
            <person name="Borchert S."/>
            <person name="Borriss R."/>
            <person name="Boursier L."/>
            <person name="Brans A."/>
            <person name="Braun M."/>
            <person name="Brignell S.C."/>
            <person name="Bron S."/>
            <person name="Brouillet S."/>
            <person name="Bruschi C.V."/>
            <person name="Caldwell B."/>
            <person name="Capuano V."/>
            <person name="Carter N.M."/>
            <person name="Choi S.-K."/>
            <person name="Codani J.-J."/>
            <person name="Connerton I.F."/>
            <person name="Cummings N.J."/>
            <person name="Daniel R.A."/>
            <person name="Denizot F."/>
            <person name="Devine K.M."/>
            <person name="Duesterhoeft A."/>
            <person name="Ehrlich S.D."/>
            <person name="Emmerson P.T."/>
            <person name="Entian K.-D."/>
            <person name="Errington J."/>
            <person name="Fabret C."/>
            <person name="Ferrari E."/>
            <person name="Foulger D."/>
            <person name="Fritz C."/>
            <person name="Fujita M."/>
            <person name="Fujita Y."/>
            <person name="Fuma S."/>
            <person name="Galizzi A."/>
            <person name="Galleron N."/>
            <person name="Ghim S.-Y."/>
            <person name="Glaser P."/>
            <person name="Goffeau A."/>
            <person name="Golightly E.J."/>
            <person name="Grandi G."/>
            <person name="Guiseppi G."/>
            <person name="Guy B.J."/>
            <person name="Haga K."/>
            <person name="Haiech J."/>
            <person name="Harwood C.R."/>
            <person name="Henaut A."/>
            <person name="Hilbert H."/>
            <person name="Holsappel S."/>
            <person name="Hosono S."/>
            <person name="Hullo M.-F."/>
            <person name="Itaya M."/>
            <person name="Jones L.-M."/>
            <person name="Joris B."/>
            <person name="Karamata D."/>
            <person name="Kasahara Y."/>
            <person name="Klaerr-Blanchard M."/>
            <person name="Klein C."/>
            <person name="Kobayashi Y."/>
            <person name="Koetter P."/>
            <person name="Koningstein G."/>
            <person name="Krogh S."/>
            <person name="Kumano M."/>
            <person name="Kurita K."/>
            <person name="Lapidus A."/>
            <person name="Lardinois S."/>
            <person name="Lauber J."/>
            <person name="Lazarevic V."/>
            <person name="Lee S.-M."/>
            <person name="Levine A."/>
            <person name="Liu H."/>
            <person name="Masuda S."/>
            <person name="Mauel C."/>
            <person name="Medigue C."/>
            <person name="Medina N."/>
            <person name="Mellado R.P."/>
            <person name="Mizuno M."/>
            <person name="Moestl D."/>
            <person name="Nakai S."/>
            <person name="Noback M."/>
            <person name="Noone D."/>
            <person name="O'Reilly M."/>
            <person name="Ogawa K."/>
            <person name="Ogiwara A."/>
            <person name="Oudega B."/>
            <person name="Park S.-H."/>
            <person name="Parro V."/>
            <person name="Pohl T.M."/>
            <person name="Portetelle D."/>
            <person name="Porwollik S."/>
            <person name="Prescott A.M."/>
            <person name="Presecan E."/>
            <person name="Pujic P."/>
            <person name="Purnelle B."/>
            <person name="Rapoport G."/>
            <person name="Rey M."/>
            <person name="Reynolds S."/>
            <person name="Rieger M."/>
            <person name="Rivolta C."/>
            <person name="Rocha E."/>
            <person name="Roche B."/>
            <person name="Rose M."/>
            <person name="Sadaie Y."/>
            <person name="Sato T."/>
            <person name="Scanlan E."/>
            <person name="Schleich S."/>
            <person name="Schroeter R."/>
            <person name="Scoffone F."/>
            <person name="Sekiguchi J."/>
            <person name="Sekowska A."/>
            <person name="Seror S.J."/>
            <person name="Serror P."/>
            <person name="Shin B.-S."/>
            <person name="Soldo B."/>
            <person name="Sorokin A."/>
            <person name="Tacconi E."/>
            <person name="Takagi T."/>
            <person name="Takahashi H."/>
            <person name="Takemaru K."/>
            <person name="Takeuchi M."/>
            <person name="Tamakoshi A."/>
            <person name="Tanaka T."/>
            <person name="Terpstra P."/>
            <person name="Tognoni A."/>
            <person name="Tosato V."/>
            <person name="Uchiyama S."/>
            <person name="Vandenbol M."/>
            <person name="Vannier F."/>
            <person name="Vassarotti A."/>
            <person name="Viari A."/>
            <person name="Wambutt R."/>
            <person name="Wedler E."/>
            <person name="Wedler H."/>
            <person name="Weitzenegger T."/>
            <person name="Winters P."/>
            <person name="Wipat A."/>
            <person name="Yamamoto H."/>
            <person name="Yamane K."/>
            <person name="Yasumoto K."/>
            <person name="Yata K."/>
            <person name="Yoshida K."/>
            <person name="Yoshikawa H.-F."/>
            <person name="Zumstein E."/>
            <person name="Yoshikawa H."/>
            <person name="Danchin A."/>
        </authorList>
    </citation>
    <scope>NUCLEOTIDE SEQUENCE [LARGE SCALE GENOMIC DNA]</scope>
    <source>
        <strain>168</strain>
    </source>
</reference>
<reference key="3">
    <citation type="journal article" date="1992" name="Gene">
        <title>Sequence of the Bacillus subtilis homolog of the Escherichia coli cell-division gene murG.</title>
        <authorList>
            <person name="Miyao A."/>
            <person name="Yoshimura A."/>
            <person name="Sato T."/>
            <person name="Yamamoto T."/>
            <person name="Theeragool G."/>
            <person name="Kobayashi Y."/>
        </authorList>
    </citation>
    <scope>NUCLEOTIDE SEQUENCE [GENOMIC DNA] OF 1-23</scope>
</reference>
<reference key="4">
    <citation type="journal article" date="1989" name="J. Bacteriol.">
        <title>Cloning and expression of a Bacillus subtilis division initiation gene for which a homolog has not been identified in another organism.</title>
        <authorList>
            <person name="Harry E.J."/>
            <person name="Wake R.G."/>
        </authorList>
    </citation>
    <scope>NUCLEOTIDE SEQUENCE [GENOMIC DNA] OF 250-303</scope>
</reference>
<reference key="5">
    <citation type="journal article" date="1995" name="Gene">
        <title>The Bacillus subtilis cell-division 135-137 degrees region contains an essential orf with significant similarity to murB and a dispensable sbp gene.</title>
        <authorList>
            <person name="Rowland S.L."/>
            <person name="Errington J."/>
            <person name="Wake R.G."/>
        </authorList>
    </citation>
    <scope>FUNCTION</scope>
</reference>